<keyword id="KW-0067">ATP-binding</keyword>
<keyword id="KW-0143">Chaperone</keyword>
<keyword id="KW-0963">Cytoplasm</keyword>
<keyword id="KW-0547">Nucleotide-binding</keyword>
<keyword id="KW-1185">Reference proteome</keyword>
<keyword id="KW-0346">Stress response</keyword>
<name>HTPG_OCEIH</name>
<gene>
    <name evidence="1" type="primary">htpG</name>
    <name type="ordered locus">OB3158</name>
</gene>
<accession>Q8CX68</accession>
<sequence length="625" mass="72319">MGKRKFKAESQKLLDMVINSIYSQREVFLRELISNASDAIDKIYYKALTDDSLSFDVDNYYIKITPNKEERTLTVVDTGIGMTKEELENNLGVIAKSGSHTFKSENEIKDGHDIIGQFGVGFYAAFMVADKVEVVTKSIDSDAAFKWESKGSDGYSITEADKQDIGTTITLYIKENQEEENYDEFLDTFTLQQIIKKYSDFIRYPIKMDVTESKLKEGSEDEYEDVVEEQTINTMVPIWKKNKSELTDDDYTNFYQEKRYGFDKPLKHVHINVDGSIRYNAILFIPESAPFNYYTRDYEKGLELYSNGVLIMDKCADLLPDYFSFVKGMVDSEDLSLNISREMLQHDRQLKLIAKNIKKKVKQQLVSLLRDERENYEKFFDAFGQQIKFGVYSDYGQNKDELKDLLLFYSSKEKKLVTLEEYVSCMPEDQKYIYYATGDSRDRIEKLPQTELVADKGYEILYFTDEIDEFAIKMLMNYDEKEFRSVSSGDLGIEEDEKEENEQENNDNAELFTAMKEVLSTKVKDVRASKRLKSHPVVLTADGEISLEMEKIINAMPDDQQIQADKVLEINVNHDIFQSLKAAQGNDDEKFKLYTNLLYNQALLIEGLPINDPVEFTNDICKVMV</sequence>
<evidence type="ECO:0000255" key="1">
    <source>
        <dbReference type="HAMAP-Rule" id="MF_00505"/>
    </source>
</evidence>
<protein>
    <recommendedName>
        <fullName evidence="1">Chaperone protein HtpG</fullName>
    </recommendedName>
    <alternativeName>
        <fullName evidence="1">Heat shock protein HtpG</fullName>
    </alternativeName>
    <alternativeName>
        <fullName evidence="1">High temperature protein G</fullName>
    </alternativeName>
</protein>
<reference key="1">
    <citation type="journal article" date="2002" name="Nucleic Acids Res.">
        <title>Genome sequence of Oceanobacillus iheyensis isolated from the Iheya Ridge and its unexpected adaptive capabilities to extreme environments.</title>
        <authorList>
            <person name="Takami H."/>
            <person name="Takaki Y."/>
            <person name="Uchiyama I."/>
        </authorList>
    </citation>
    <scope>NUCLEOTIDE SEQUENCE [LARGE SCALE GENOMIC DNA]</scope>
    <source>
        <strain>DSM 14371 / CIP 107618 / JCM 11309 / KCTC 3954 / HTE831</strain>
    </source>
</reference>
<comment type="function">
    <text evidence="1">Molecular chaperone. Has ATPase activity.</text>
</comment>
<comment type="subunit">
    <text evidence="1">Homodimer.</text>
</comment>
<comment type="subcellular location">
    <subcellularLocation>
        <location evidence="1">Cytoplasm</location>
    </subcellularLocation>
</comment>
<comment type="similarity">
    <text evidence="1">Belongs to the heat shock protein 90 family.</text>
</comment>
<feature type="chain" id="PRO_0000062999" description="Chaperone protein HtpG">
    <location>
        <begin position="1"/>
        <end position="625"/>
    </location>
</feature>
<feature type="region of interest" description="A; substrate-binding" evidence="1">
    <location>
        <begin position="1"/>
        <end position="341"/>
    </location>
</feature>
<feature type="region of interest" description="B" evidence="1">
    <location>
        <begin position="342"/>
        <end position="551"/>
    </location>
</feature>
<feature type="region of interest" description="C" evidence="1">
    <location>
        <begin position="552"/>
        <end position="625"/>
    </location>
</feature>
<dbReference type="EMBL" id="BA000028">
    <property type="protein sequence ID" value="BAC15114.1"/>
    <property type="molecule type" value="Genomic_DNA"/>
</dbReference>
<dbReference type="RefSeq" id="WP_011067555.1">
    <property type="nucleotide sequence ID" value="NC_004193.1"/>
</dbReference>
<dbReference type="SMR" id="Q8CX68"/>
<dbReference type="STRING" id="221109.gene:10735410"/>
<dbReference type="KEGG" id="oih:OB3158"/>
<dbReference type="eggNOG" id="COG0326">
    <property type="taxonomic scope" value="Bacteria"/>
</dbReference>
<dbReference type="HOGENOM" id="CLU_006684_3_0_9"/>
<dbReference type="OrthoDB" id="9802640at2"/>
<dbReference type="PhylomeDB" id="Q8CX68"/>
<dbReference type="Proteomes" id="UP000000822">
    <property type="component" value="Chromosome"/>
</dbReference>
<dbReference type="GO" id="GO:0005737">
    <property type="term" value="C:cytoplasm"/>
    <property type="evidence" value="ECO:0007669"/>
    <property type="project" value="UniProtKB-SubCell"/>
</dbReference>
<dbReference type="GO" id="GO:0005524">
    <property type="term" value="F:ATP binding"/>
    <property type="evidence" value="ECO:0007669"/>
    <property type="project" value="UniProtKB-UniRule"/>
</dbReference>
<dbReference type="GO" id="GO:0016887">
    <property type="term" value="F:ATP hydrolysis activity"/>
    <property type="evidence" value="ECO:0007669"/>
    <property type="project" value="InterPro"/>
</dbReference>
<dbReference type="GO" id="GO:0140662">
    <property type="term" value="F:ATP-dependent protein folding chaperone"/>
    <property type="evidence" value="ECO:0007669"/>
    <property type="project" value="InterPro"/>
</dbReference>
<dbReference type="GO" id="GO:0051082">
    <property type="term" value="F:unfolded protein binding"/>
    <property type="evidence" value="ECO:0007669"/>
    <property type="project" value="UniProtKB-UniRule"/>
</dbReference>
<dbReference type="CDD" id="cd16927">
    <property type="entry name" value="HATPase_Hsp90-like"/>
    <property type="match status" value="1"/>
</dbReference>
<dbReference type="FunFam" id="1.20.120.790:FF:000006">
    <property type="entry name" value="Chaperone protein HtpG"/>
    <property type="match status" value="1"/>
</dbReference>
<dbReference type="FunFam" id="3.40.50.11260:FF:000008">
    <property type="entry name" value="Chaperone protein HtpG"/>
    <property type="match status" value="1"/>
</dbReference>
<dbReference type="FunFam" id="3.30.565.10:FF:000357">
    <property type="entry name" value="Heat shock protein HSP 90-beta"/>
    <property type="match status" value="1"/>
</dbReference>
<dbReference type="Gene3D" id="3.30.230.80">
    <property type="match status" value="1"/>
</dbReference>
<dbReference type="Gene3D" id="3.40.50.11260">
    <property type="match status" value="1"/>
</dbReference>
<dbReference type="Gene3D" id="1.20.120.790">
    <property type="entry name" value="Heat shock protein 90, C-terminal domain"/>
    <property type="match status" value="1"/>
</dbReference>
<dbReference type="Gene3D" id="3.30.565.10">
    <property type="entry name" value="Histidine kinase-like ATPase, C-terminal domain"/>
    <property type="match status" value="1"/>
</dbReference>
<dbReference type="HAMAP" id="MF_00505">
    <property type="entry name" value="HSP90"/>
    <property type="match status" value="1"/>
</dbReference>
<dbReference type="InterPro" id="IPR036890">
    <property type="entry name" value="HATPase_C_sf"/>
</dbReference>
<dbReference type="InterPro" id="IPR019805">
    <property type="entry name" value="Heat_shock_protein_90_CS"/>
</dbReference>
<dbReference type="InterPro" id="IPR037196">
    <property type="entry name" value="HSP90_C"/>
</dbReference>
<dbReference type="InterPro" id="IPR001404">
    <property type="entry name" value="Hsp90_fam"/>
</dbReference>
<dbReference type="InterPro" id="IPR020575">
    <property type="entry name" value="Hsp90_N"/>
</dbReference>
<dbReference type="InterPro" id="IPR020568">
    <property type="entry name" value="Ribosomal_Su5_D2-typ_SF"/>
</dbReference>
<dbReference type="NCBIfam" id="NF003555">
    <property type="entry name" value="PRK05218.1"/>
    <property type="match status" value="1"/>
</dbReference>
<dbReference type="PANTHER" id="PTHR11528">
    <property type="entry name" value="HEAT SHOCK PROTEIN 90 FAMILY MEMBER"/>
    <property type="match status" value="1"/>
</dbReference>
<dbReference type="Pfam" id="PF13589">
    <property type="entry name" value="HATPase_c_3"/>
    <property type="match status" value="1"/>
</dbReference>
<dbReference type="Pfam" id="PF00183">
    <property type="entry name" value="HSP90"/>
    <property type="match status" value="1"/>
</dbReference>
<dbReference type="PIRSF" id="PIRSF002583">
    <property type="entry name" value="Hsp90"/>
    <property type="match status" value="1"/>
</dbReference>
<dbReference type="PRINTS" id="PR00775">
    <property type="entry name" value="HEATSHOCK90"/>
</dbReference>
<dbReference type="SUPFAM" id="SSF55874">
    <property type="entry name" value="ATPase domain of HSP90 chaperone/DNA topoisomerase II/histidine kinase"/>
    <property type="match status" value="1"/>
</dbReference>
<dbReference type="SUPFAM" id="SSF110942">
    <property type="entry name" value="HSP90 C-terminal domain"/>
    <property type="match status" value="1"/>
</dbReference>
<dbReference type="SUPFAM" id="SSF54211">
    <property type="entry name" value="Ribosomal protein S5 domain 2-like"/>
    <property type="match status" value="1"/>
</dbReference>
<dbReference type="PROSITE" id="PS00298">
    <property type="entry name" value="HSP90"/>
    <property type="match status" value="1"/>
</dbReference>
<organism>
    <name type="scientific">Oceanobacillus iheyensis (strain DSM 14371 / CIP 107618 / JCM 11309 / KCTC 3954 / HTE831)</name>
    <dbReference type="NCBI Taxonomy" id="221109"/>
    <lineage>
        <taxon>Bacteria</taxon>
        <taxon>Bacillati</taxon>
        <taxon>Bacillota</taxon>
        <taxon>Bacilli</taxon>
        <taxon>Bacillales</taxon>
        <taxon>Bacillaceae</taxon>
        <taxon>Oceanobacillus</taxon>
    </lineage>
</organism>
<proteinExistence type="inferred from homology"/>